<organism>
    <name type="scientific">Homo sapiens</name>
    <name type="common">Human</name>
    <dbReference type="NCBI Taxonomy" id="9606"/>
    <lineage>
        <taxon>Eukaryota</taxon>
        <taxon>Metazoa</taxon>
        <taxon>Chordata</taxon>
        <taxon>Craniata</taxon>
        <taxon>Vertebrata</taxon>
        <taxon>Euteleostomi</taxon>
        <taxon>Mammalia</taxon>
        <taxon>Eutheria</taxon>
        <taxon>Euarchontoglires</taxon>
        <taxon>Primates</taxon>
        <taxon>Haplorrhini</taxon>
        <taxon>Catarrhini</taxon>
        <taxon>Hominidae</taxon>
        <taxon>Homo</taxon>
    </lineage>
</organism>
<reference key="1">
    <citation type="journal article" date="2006" name="Nat. Cell Biol.">
        <title>CUL4-DDB1 ubiquitin ligase interacts with multiple WD40-repeat proteins and regulates histone methylation.</title>
        <authorList>
            <person name="Higa L.A."/>
            <person name="Wu M."/>
            <person name="Ye T."/>
            <person name="Kobayashi R."/>
            <person name="Sun H."/>
            <person name="Zhang H."/>
        </authorList>
    </citation>
    <scope>NUCLEOTIDE SEQUENCE [MRNA]</scope>
    <scope>INTERACTION WITH CUL4A AND/OR CUL4B</scope>
    <scope>VARIANT ALA-153</scope>
</reference>
<reference key="2">
    <citation type="journal article" date="2004" name="Nat. Genet.">
        <title>Complete sequencing and characterization of 21,243 full-length human cDNAs.</title>
        <authorList>
            <person name="Ota T."/>
            <person name="Suzuki Y."/>
            <person name="Nishikawa T."/>
            <person name="Otsuki T."/>
            <person name="Sugiyama T."/>
            <person name="Irie R."/>
            <person name="Wakamatsu A."/>
            <person name="Hayashi K."/>
            <person name="Sato H."/>
            <person name="Nagai K."/>
            <person name="Kimura K."/>
            <person name="Makita H."/>
            <person name="Sekine M."/>
            <person name="Obayashi M."/>
            <person name="Nishi T."/>
            <person name="Shibahara T."/>
            <person name="Tanaka T."/>
            <person name="Ishii S."/>
            <person name="Yamamoto J."/>
            <person name="Saito K."/>
            <person name="Kawai Y."/>
            <person name="Isono Y."/>
            <person name="Nakamura Y."/>
            <person name="Nagahari K."/>
            <person name="Murakami K."/>
            <person name="Yasuda T."/>
            <person name="Iwayanagi T."/>
            <person name="Wagatsuma M."/>
            <person name="Shiratori A."/>
            <person name="Sudo H."/>
            <person name="Hosoiri T."/>
            <person name="Kaku Y."/>
            <person name="Kodaira H."/>
            <person name="Kondo H."/>
            <person name="Sugawara M."/>
            <person name="Takahashi M."/>
            <person name="Kanda K."/>
            <person name="Yokoi T."/>
            <person name="Furuya T."/>
            <person name="Kikkawa E."/>
            <person name="Omura Y."/>
            <person name="Abe K."/>
            <person name="Kamihara K."/>
            <person name="Katsuta N."/>
            <person name="Sato K."/>
            <person name="Tanikawa M."/>
            <person name="Yamazaki M."/>
            <person name="Ninomiya K."/>
            <person name="Ishibashi T."/>
            <person name="Yamashita H."/>
            <person name="Murakawa K."/>
            <person name="Fujimori K."/>
            <person name="Tanai H."/>
            <person name="Kimata M."/>
            <person name="Watanabe M."/>
            <person name="Hiraoka S."/>
            <person name="Chiba Y."/>
            <person name="Ishida S."/>
            <person name="Ono Y."/>
            <person name="Takiguchi S."/>
            <person name="Watanabe S."/>
            <person name="Yosida M."/>
            <person name="Hotuta T."/>
            <person name="Kusano J."/>
            <person name="Kanehori K."/>
            <person name="Takahashi-Fujii A."/>
            <person name="Hara H."/>
            <person name="Tanase T.-O."/>
            <person name="Nomura Y."/>
            <person name="Togiya S."/>
            <person name="Komai F."/>
            <person name="Hara R."/>
            <person name="Takeuchi K."/>
            <person name="Arita M."/>
            <person name="Imose N."/>
            <person name="Musashino K."/>
            <person name="Yuuki H."/>
            <person name="Oshima A."/>
            <person name="Sasaki N."/>
            <person name="Aotsuka S."/>
            <person name="Yoshikawa Y."/>
            <person name="Matsunawa H."/>
            <person name="Ichihara T."/>
            <person name="Shiohata N."/>
            <person name="Sano S."/>
            <person name="Moriya S."/>
            <person name="Momiyama H."/>
            <person name="Satoh N."/>
            <person name="Takami S."/>
            <person name="Terashima Y."/>
            <person name="Suzuki O."/>
            <person name="Nakagawa S."/>
            <person name="Senoh A."/>
            <person name="Mizoguchi H."/>
            <person name="Goto Y."/>
            <person name="Shimizu F."/>
            <person name="Wakebe H."/>
            <person name="Hishigaki H."/>
            <person name="Watanabe T."/>
            <person name="Sugiyama A."/>
            <person name="Takemoto M."/>
            <person name="Kawakami B."/>
            <person name="Yamazaki M."/>
            <person name="Watanabe K."/>
            <person name="Kumagai A."/>
            <person name="Itakura S."/>
            <person name="Fukuzumi Y."/>
            <person name="Fujimori Y."/>
            <person name="Komiyama M."/>
            <person name="Tashiro H."/>
            <person name="Tanigami A."/>
            <person name="Fujiwara T."/>
            <person name="Ono T."/>
            <person name="Yamada K."/>
            <person name="Fujii Y."/>
            <person name="Ozaki K."/>
            <person name="Hirao M."/>
            <person name="Ohmori Y."/>
            <person name="Kawabata A."/>
            <person name="Hikiji T."/>
            <person name="Kobatake N."/>
            <person name="Inagaki H."/>
            <person name="Ikema Y."/>
            <person name="Okamoto S."/>
            <person name="Okitani R."/>
            <person name="Kawakami T."/>
            <person name="Noguchi S."/>
            <person name="Itoh T."/>
            <person name="Shigeta K."/>
            <person name="Senba T."/>
            <person name="Matsumura K."/>
            <person name="Nakajima Y."/>
            <person name="Mizuno T."/>
            <person name="Morinaga M."/>
            <person name="Sasaki M."/>
            <person name="Togashi T."/>
            <person name="Oyama M."/>
            <person name="Hata H."/>
            <person name="Watanabe M."/>
            <person name="Komatsu T."/>
            <person name="Mizushima-Sugano J."/>
            <person name="Satoh T."/>
            <person name="Shirai Y."/>
            <person name="Takahashi Y."/>
            <person name="Nakagawa K."/>
            <person name="Okumura K."/>
            <person name="Nagase T."/>
            <person name="Nomura N."/>
            <person name="Kikuchi H."/>
            <person name="Masuho Y."/>
            <person name="Yamashita R."/>
            <person name="Nakai K."/>
            <person name="Yada T."/>
            <person name="Nakamura Y."/>
            <person name="Ohara O."/>
            <person name="Isogai T."/>
            <person name="Sugano S."/>
        </authorList>
    </citation>
    <scope>NUCLEOTIDE SEQUENCE [LARGE SCALE MRNA]</scope>
    <scope>VARIANT ALA-153</scope>
    <source>
        <tissue>Teratocarcinoma</tissue>
    </source>
</reference>
<reference key="3">
    <citation type="journal article" date="2006" name="Nature">
        <title>Analysis of the DNA sequence and duplication history of human chromosome 15.</title>
        <authorList>
            <person name="Zody M.C."/>
            <person name="Garber M."/>
            <person name="Sharpe T."/>
            <person name="Young S.K."/>
            <person name="Rowen L."/>
            <person name="O'Neill K."/>
            <person name="Whittaker C.A."/>
            <person name="Kamal M."/>
            <person name="Chang J.L."/>
            <person name="Cuomo C.A."/>
            <person name="Dewar K."/>
            <person name="FitzGerald M.G."/>
            <person name="Kodira C.D."/>
            <person name="Madan A."/>
            <person name="Qin S."/>
            <person name="Yang X."/>
            <person name="Abbasi N."/>
            <person name="Abouelleil A."/>
            <person name="Arachchi H.M."/>
            <person name="Baradarani L."/>
            <person name="Birditt B."/>
            <person name="Bloom S."/>
            <person name="Bloom T."/>
            <person name="Borowsky M.L."/>
            <person name="Burke J."/>
            <person name="Butler J."/>
            <person name="Cook A."/>
            <person name="DeArellano K."/>
            <person name="DeCaprio D."/>
            <person name="Dorris L. III"/>
            <person name="Dors M."/>
            <person name="Eichler E.E."/>
            <person name="Engels R."/>
            <person name="Fahey J."/>
            <person name="Fleetwood P."/>
            <person name="Friedman C."/>
            <person name="Gearin G."/>
            <person name="Hall J.L."/>
            <person name="Hensley G."/>
            <person name="Johnson E."/>
            <person name="Jones C."/>
            <person name="Kamat A."/>
            <person name="Kaur A."/>
            <person name="Locke D.P."/>
            <person name="Madan A."/>
            <person name="Munson G."/>
            <person name="Jaffe D.B."/>
            <person name="Lui A."/>
            <person name="Macdonald P."/>
            <person name="Mauceli E."/>
            <person name="Naylor J.W."/>
            <person name="Nesbitt R."/>
            <person name="Nicol R."/>
            <person name="O'Leary S.B."/>
            <person name="Ratcliffe A."/>
            <person name="Rounsley S."/>
            <person name="She X."/>
            <person name="Sneddon K.M.B."/>
            <person name="Stewart S."/>
            <person name="Sougnez C."/>
            <person name="Stone S.M."/>
            <person name="Topham K."/>
            <person name="Vincent D."/>
            <person name="Wang S."/>
            <person name="Zimmer A.R."/>
            <person name="Birren B.W."/>
            <person name="Hood L."/>
            <person name="Lander E.S."/>
            <person name="Nusbaum C."/>
        </authorList>
    </citation>
    <scope>NUCLEOTIDE SEQUENCE [LARGE SCALE GENOMIC DNA]</scope>
</reference>
<reference key="4">
    <citation type="journal article" date="2004" name="Genome Res.">
        <title>The status, quality, and expansion of the NIH full-length cDNA project: the Mammalian Gene Collection (MGC).</title>
        <authorList>
            <consortium name="The MGC Project Team"/>
        </authorList>
    </citation>
    <scope>NUCLEOTIDE SEQUENCE [LARGE SCALE MRNA]</scope>
    <scope>VARIANT ALA-153</scope>
    <source>
        <tissue>Eye</tissue>
        <tissue>Kidney</tissue>
    </source>
</reference>
<sequence length="626" mass="69769">MSRSGAAAEKADSRQRPQMKVNEYKENQNIAYVSLRPAQTTVLIKTAKVYLAPFSLSNYQLDQLMCPKSLSEKNSNNEVACKKTKIKKTCRRIIPPKMKNTSSKAESTLQNSSSAVHTESNKLQPKRTADAMNLSVDVESSQDGDSDEDTTPSLDFSGLSPYERKRLKNISENADFFASLQLSESAARLREMIEKRQPPKSKRKKPKRENGIGCRRSMRLLKVDPSGVSLPAAPTPPTLVADETPLLPPGPLEMTSENQEDNNERFKGFLHTWAGMSKPSSKNTEKGLSSIKSYKANLNGMVISEDTVYKVTTGPIFSMALHPSETRTLVAVGAKFGQVGLCDLTQQPKEDGVYVFHPHSQPVSCLYFSPANPAHILSLSYDGTLRCGDFSRAIFEEVYRNERSSFSSFDFLAEDASTLIVGHWDGNMSLVDRRTPGTSYEKLTSSSMGKIRTVHVHPVHRQYFITAGLRDTHIYDARRLNSRRSQPLISLTEHTKSIASAYFSPLTGNRVVTTCADCNLRIFDSSCISSKIPLLTTIRHNTFTGRWLTRFQAMWDPKQEDCVIVGSMAHPRRVEIFHETGKRVHSFGGEYLVSVCSINAMHPTRYILAGGNSSGKIHVFMNEKSC</sequence>
<proteinExistence type="evidence at protein level"/>
<evidence type="ECO:0000250" key="1"/>
<evidence type="ECO:0000256" key="2">
    <source>
        <dbReference type="SAM" id="MobiDB-lite"/>
    </source>
</evidence>
<evidence type="ECO:0000269" key="3">
    <source>
    </source>
</evidence>
<evidence type="ECO:0000269" key="4">
    <source>
    </source>
</evidence>
<evidence type="ECO:0000269" key="5">
    <source>
    </source>
</evidence>
<evidence type="ECO:0000305" key="6"/>
<protein>
    <recommendedName>
        <fullName>WD repeat-containing protein 76</fullName>
    </recommendedName>
</protein>
<feature type="chain" id="PRO_0000242691" description="WD repeat-containing protein 76">
    <location>
        <begin position="1"/>
        <end position="626"/>
    </location>
</feature>
<feature type="repeat" description="WD 1">
    <location>
        <begin position="311"/>
        <end position="352"/>
    </location>
</feature>
<feature type="repeat" description="WD 2">
    <location>
        <begin position="358"/>
        <end position="400"/>
    </location>
</feature>
<feature type="repeat" description="WD 3">
    <location>
        <begin position="402"/>
        <end position="441"/>
    </location>
</feature>
<feature type="repeat" description="WD 4">
    <location>
        <begin position="446"/>
        <end position="485"/>
    </location>
</feature>
<feature type="repeat" description="WD 5">
    <location>
        <begin position="493"/>
        <end position="533"/>
    </location>
</feature>
<feature type="repeat" description="WD 6">
    <location>
        <begin position="535"/>
        <end position="565"/>
    </location>
</feature>
<feature type="repeat" description="WD 7">
    <location>
        <begin position="590"/>
        <end position="626"/>
    </location>
</feature>
<feature type="region of interest" description="Disordered" evidence="2">
    <location>
        <begin position="1"/>
        <end position="21"/>
    </location>
</feature>
<feature type="region of interest" description="Disordered" evidence="2">
    <location>
        <begin position="95"/>
        <end position="159"/>
    </location>
</feature>
<feature type="compositionally biased region" description="Polar residues" evidence="2">
    <location>
        <begin position="99"/>
        <end position="123"/>
    </location>
</feature>
<feature type="compositionally biased region" description="Acidic residues" evidence="2">
    <location>
        <begin position="140"/>
        <end position="150"/>
    </location>
</feature>
<feature type="sequence variant" id="VAR_026862" description="In dbSNP:rs678084." evidence="3 4 5">
    <original>S</original>
    <variation>A</variation>
    <location>
        <position position="153"/>
    </location>
</feature>
<feature type="sequence variant" id="VAR_026863" description="In dbSNP:rs3742985.">
    <original>S</original>
    <variation>G</variation>
    <location>
        <position position="614"/>
    </location>
</feature>
<comment type="function">
    <text evidence="1">Specifically binds 5-hydroxymethylcytosine (5hmC), suggesting that it acts as a specific reader of 5hmC.</text>
</comment>
<comment type="subunit">
    <text evidence="5">Interacts with CUL4A and/or CUL4B.</text>
</comment>
<comment type="similarity">
    <text evidence="6">Belongs to the WD repeat DDB2/WDR76 family.</text>
</comment>
<keyword id="KW-1267">Proteomics identification</keyword>
<keyword id="KW-1185">Reference proteome</keyword>
<keyword id="KW-0677">Repeat</keyword>
<keyword id="KW-0853">WD repeat</keyword>
<gene>
    <name type="primary">WDR76</name>
</gene>
<accession>Q9H967</accession>
<accession>A0MNP5</accession>
<accession>Q05CI4</accession>
<name>WDR76_HUMAN</name>
<dbReference type="EMBL" id="EF011624">
    <property type="protein sequence ID" value="ABK41114.1"/>
    <property type="molecule type" value="mRNA"/>
</dbReference>
<dbReference type="EMBL" id="AK023035">
    <property type="protein sequence ID" value="BAB14369.1"/>
    <property type="molecule type" value="mRNA"/>
</dbReference>
<dbReference type="EMBL" id="AK290933">
    <property type="protein sequence ID" value="BAF83622.1"/>
    <property type="molecule type" value="mRNA"/>
</dbReference>
<dbReference type="EMBL" id="AC018512">
    <property type="status" value="NOT_ANNOTATED_CDS"/>
    <property type="molecule type" value="Genomic_DNA"/>
</dbReference>
<dbReference type="EMBL" id="AC023356">
    <property type="status" value="NOT_ANNOTATED_CDS"/>
    <property type="molecule type" value="Genomic_DNA"/>
</dbReference>
<dbReference type="EMBL" id="BC025247">
    <property type="protein sequence ID" value="AAH25247.1"/>
    <property type="molecule type" value="mRNA"/>
</dbReference>
<dbReference type="EMBL" id="BC051855">
    <property type="protein sequence ID" value="AAH51855.1"/>
    <property type="molecule type" value="mRNA"/>
</dbReference>
<dbReference type="CCDS" id="CCDS10106.1"/>
<dbReference type="RefSeq" id="NP_001161413.1">
    <property type="nucleotide sequence ID" value="NM_001167941.1"/>
</dbReference>
<dbReference type="RefSeq" id="NP_079184.2">
    <property type="nucleotide sequence ID" value="NM_024908.4"/>
</dbReference>
<dbReference type="RefSeq" id="XP_005254737.1">
    <property type="nucleotide sequence ID" value="XM_005254680.3"/>
</dbReference>
<dbReference type="SMR" id="Q9H967"/>
<dbReference type="BioGRID" id="123035">
    <property type="interactions" value="387"/>
</dbReference>
<dbReference type="FunCoup" id="Q9H967">
    <property type="interactions" value="1585"/>
</dbReference>
<dbReference type="IntAct" id="Q9H967">
    <property type="interactions" value="52"/>
</dbReference>
<dbReference type="MINT" id="Q9H967"/>
<dbReference type="STRING" id="9606.ENSP00000263795"/>
<dbReference type="GlyGen" id="Q9H967">
    <property type="glycosylation" value="1 site"/>
</dbReference>
<dbReference type="iPTMnet" id="Q9H967"/>
<dbReference type="PhosphoSitePlus" id="Q9H967"/>
<dbReference type="BioMuta" id="WDR76"/>
<dbReference type="DMDM" id="313104049"/>
<dbReference type="jPOST" id="Q9H967"/>
<dbReference type="MassIVE" id="Q9H967"/>
<dbReference type="PaxDb" id="9606-ENSP00000263795"/>
<dbReference type="PeptideAtlas" id="Q9H967"/>
<dbReference type="ProteomicsDB" id="81286"/>
<dbReference type="Pumba" id="Q9H967"/>
<dbReference type="Antibodypedia" id="52296">
    <property type="antibodies" value="77 antibodies from 21 providers"/>
</dbReference>
<dbReference type="DNASU" id="79968"/>
<dbReference type="Ensembl" id="ENST00000263795.11">
    <property type="protein sequence ID" value="ENSP00000263795.6"/>
    <property type="gene ID" value="ENSG00000092470.12"/>
</dbReference>
<dbReference type="GeneID" id="79968"/>
<dbReference type="KEGG" id="hsa:79968"/>
<dbReference type="MANE-Select" id="ENST00000263795.11">
    <property type="protein sequence ID" value="ENSP00000263795.6"/>
    <property type="RefSeq nucleotide sequence ID" value="NM_024908.4"/>
    <property type="RefSeq protein sequence ID" value="NP_079184.2"/>
</dbReference>
<dbReference type="UCSC" id="uc001zti.3">
    <property type="organism name" value="human"/>
</dbReference>
<dbReference type="AGR" id="HGNC:25773"/>
<dbReference type="CTD" id="79968"/>
<dbReference type="DisGeNET" id="79968"/>
<dbReference type="GeneCards" id="WDR76"/>
<dbReference type="HGNC" id="HGNC:25773">
    <property type="gene designation" value="WDR76"/>
</dbReference>
<dbReference type="HPA" id="ENSG00000092470">
    <property type="expression patterns" value="Tissue enhanced (bone marrow, lymphoid tissue)"/>
</dbReference>
<dbReference type="MIM" id="620302">
    <property type="type" value="gene"/>
</dbReference>
<dbReference type="neXtProt" id="NX_Q9H967"/>
<dbReference type="OpenTargets" id="ENSG00000092470"/>
<dbReference type="PharmGKB" id="PA142670580"/>
<dbReference type="VEuPathDB" id="HostDB:ENSG00000092470"/>
<dbReference type="eggNOG" id="KOG4328">
    <property type="taxonomic scope" value="Eukaryota"/>
</dbReference>
<dbReference type="GeneTree" id="ENSGT00510000048144"/>
<dbReference type="InParanoid" id="Q9H967"/>
<dbReference type="OMA" id="DPNTLYW"/>
<dbReference type="OrthoDB" id="9890280at2759"/>
<dbReference type="PAN-GO" id="Q9H967">
    <property type="GO annotations" value="3 GO annotations based on evolutionary models"/>
</dbReference>
<dbReference type="PhylomeDB" id="Q9H967"/>
<dbReference type="TreeFam" id="TF314788"/>
<dbReference type="PathwayCommons" id="Q9H967"/>
<dbReference type="SignaLink" id="Q9H967"/>
<dbReference type="BioGRID-ORCS" id="79968">
    <property type="hits" value="13 hits in 1162 CRISPR screens"/>
</dbReference>
<dbReference type="ChiTaRS" id="WDR76">
    <property type="organism name" value="human"/>
</dbReference>
<dbReference type="GenomeRNAi" id="79968"/>
<dbReference type="Pharos" id="Q9H967">
    <property type="development level" value="Tbio"/>
</dbReference>
<dbReference type="PRO" id="PR:Q9H967"/>
<dbReference type="Proteomes" id="UP000005640">
    <property type="component" value="Chromosome 15"/>
</dbReference>
<dbReference type="RNAct" id="Q9H967">
    <property type="molecule type" value="protein"/>
</dbReference>
<dbReference type="Bgee" id="ENSG00000092470">
    <property type="expression patterns" value="Expressed in oocyte and 120 other cell types or tissues"/>
</dbReference>
<dbReference type="ExpressionAtlas" id="Q9H967">
    <property type="expression patterns" value="baseline and differential"/>
</dbReference>
<dbReference type="GO" id="GO:0000792">
    <property type="term" value="C:heterochromatin"/>
    <property type="evidence" value="ECO:0000315"/>
    <property type="project" value="UniProtKB"/>
</dbReference>
<dbReference type="GO" id="GO:0005634">
    <property type="term" value="C:nucleus"/>
    <property type="evidence" value="ECO:0000314"/>
    <property type="project" value="UniProtKB"/>
</dbReference>
<dbReference type="GO" id="GO:0090734">
    <property type="term" value="C:site of DNA damage"/>
    <property type="evidence" value="ECO:0000315"/>
    <property type="project" value="UniProtKB"/>
</dbReference>
<dbReference type="GO" id="GO:0003677">
    <property type="term" value="F:DNA binding"/>
    <property type="evidence" value="ECO:0000318"/>
    <property type="project" value="GO_Central"/>
</dbReference>
<dbReference type="GO" id="GO:0019899">
    <property type="term" value="F:enzyme binding"/>
    <property type="evidence" value="ECO:0000353"/>
    <property type="project" value="UniProtKB"/>
</dbReference>
<dbReference type="GO" id="GO:0006974">
    <property type="term" value="P:DNA damage response"/>
    <property type="evidence" value="ECO:0000315"/>
    <property type="project" value="UniProtKB"/>
</dbReference>
<dbReference type="GO" id="GO:2000001">
    <property type="term" value="P:regulation of DNA damage checkpoint"/>
    <property type="evidence" value="ECO:0000318"/>
    <property type="project" value="GO_Central"/>
</dbReference>
<dbReference type="FunFam" id="2.130.10.10:FF:000180">
    <property type="entry name" value="WD repeat-containing protein 76"/>
    <property type="match status" value="1"/>
</dbReference>
<dbReference type="Gene3D" id="2.130.10.10">
    <property type="entry name" value="YVTN repeat-like/Quinoprotein amine dehydrogenase"/>
    <property type="match status" value="1"/>
</dbReference>
<dbReference type="InterPro" id="IPR015943">
    <property type="entry name" value="WD40/YVTN_repeat-like_dom_sf"/>
</dbReference>
<dbReference type="InterPro" id="IPR036322">
    <property type="entry name" value="WD40_repeat_dom_sf"/>
</dbReference>
<dbReference type="InterPro" id="IPR001680">
    <property type="entry name" value="WD40_rpt"/>
</dbReference>
<dbReference type="InterPro" id="IPR050853">
    <property type="entry name" value="WD_repeat_DNA-damage-binding"/>
</dbReference>
<dbReference type="PANTHER" id="PTHR14773">
    <property type="entry name" value="WD REPEAT-CONTAINING PROTEIN 76"/>
    <property type="match status" value="1"/>
</dbReference>
<dbReference type="PANTHER" id="PTHR14773:SF0">
    <property type="entry name" value="WD REPEAT-CONTAINING PROTEIN 76"/>
    <property type="match status" value="1"/>
</dbReference>
<dbReference type="Pfam" id="PF00400">
    <property type="entry name" value="WD40"/>
    <property type="match status" value="2"/>
</dbReference>
<dbReference type="SMART" id="SM00320">
    <property type="entry name" value="WD40"/>
    <property type="match status" value="5"/>
</dbReference>
<dbReference type="SUPFAM" id="SSF50978">
    <property type="entry name" value="WD40 repeat-like"/>
    <property type="match status" value="1"/>
</dbReference>